<gene>
    <name evidence="1" type="primary">hel308</name>
    <name type="ordered locus">SSO2462</name>
</gene>
<name>HELS_SACS2</name>
<protein>
    <recommendedName>
        <fullName evidence="1">ATP-dependent DNA helicase Hel308</fullName>
        <ecNumber evidence="1">5.6.2.4</ecNumber>
    </recommendedName>
    <alternativeName>
        <fullName evidence="1">DNA 3'-5' helicase Hel308</fullName>
    </alternativeName>
</protein>
<dbReference type="EC" id="5.6.2.4" evidence="1"/>
<dbReference type="EMBL" id="AE006641">
    <property type="protein sequence ID" value="AAK42601.1"/>
    <property type="status" value="ALT_INIT"/>
    <property type="molecule type" value="Genomic_DNA"/>
</dbReference>
<dbReference type="PIR" id="B90418">
    <property type="entry name" value="B90418"/>
</dbReference>
<dbReference type="RefSeq" id="WP_010923869.1">
    <property type="nucleotide sequence ID" value="NC_002754.1"/>
</dbReference>
<dbReference type="SMR" id="Q97VY9"/>
<dbReference type="FunCoup" id="Q97VY9">
    <property type="interactions" value="120"/>
</dbReference>
<dbReference type="STRING" id="273057.SSO2462"/>
<dbReference type="PaxDb" id="273057-SSO2462"/>
<dbReference type="EnsemblBacteria" id="AAK42601">
    <property type="protein sequence ID" value="AAK42601"/>
    <property type="gene ID" value="SSO2462"/>
</dbReference>
<dbReference type="GeneID" id="7806244"/>
<dbReference type="KEGG" id="sso:SSO2462"/>
<dbReference type="PATRIC" id="fig|273057.12.peg.2540"/>
<dbReference type="eggNOG" id="arCOG00553">
    <property type="taxonomic scope" value="Archaea"/>
</dbReference>
<dbReference type="HOGENOM" id="CLU_006553_3_0_2"/>
<dbReference type="InParanoid" id="Q97VY9"/>
<dbReference type="PhylomeDB" id="Q97VY9"/>
<dbReference type="Proteomes" id="UP000001974">
    <property type="component" value="Chromosome"/>
</dbReference>
<dbReference type="GO" id="GO:0043138">
    <property type="term" value="F:3'-5' DNA helicase activity"/>
    <property type="evidence" value="ECO:0007669"/>
    <property type="project" value="UniProtKB-UniRule"/>
</dbReference>
<dbReference type="GO" id="GO:0005524">
    <property type="term" value="F:ATP binding"/>
    <property type="evidence" value="ECO:0007669"/>
    <property type="project" value="UniProtKB-UniRule"/>
</dbReference>
<dbReference type="GO" id="GO:0016887">
    <property type="term" value="F:ATP hydrolysis activity"/>
    <property type="evidence" value="ECO:0007669"/>
    <property type="project" value="RHEA"/>
</dbReference>
<dbReference type="GO" id="GO:0003677">
    <property type="term" value="F:DNA binding"/>
    <property type="evidence" value="ECO:0007669"/>
    <property type="project" value="UniProtKB-UniRule"/>
</dbReference>
<dbReference type="GO" id="GO:0006281">
    <property type="term" value="P:DNA repair"/>
    <property type="evidence" value="ECO:0007669"/>
    <property type="project" value="UniProtKB-UniRule"/>
</dbReference>
<dbReference type="CDD" id="cd18028">
    <property type="entry name" value="DEXHc_archSki2"/>
    <property type="match status" value="1"/>
</dbReference>
<dbReference type="CDD" id="cd18795">
    <property type="entry name" value="SF2_C_Ski2"/>
    <property type="match status" value="1"/>
</dbReference>
<dbReference type="Gene3D" id="1.10.3380.30">
    <property type="match status" value="1"/>
</dbReference>
<dbReference type="Gene3D" id="1.10.150.20">
    <property type="entry name" value="5' to 3' exonuclease, C-terminal subdomain"/>
    <property type="match status" value="1"/>
</dbReference>
<dbReference type="Gene3D" id="3.40.50.300">
    <property type="entry name" value="P-loop containing nucleotide triphosphate hydrolases"/>
    <property type="match status" value="2"/>
</dbReference>
<dbReference type="HAMAP" id="MF_00442">
    <property type="entry name" value="Helicase_Hel308"/>
    <property type="match status" value="1"/>
</dbReference>
<dbReference type="InterPro" id="IPR011545">
    <property type="entry name" value="DEAD/DEAH_box_helicase_dom"/>
</dbReference>
<dbReference type="InterPro" id="IPR048772">
    <property type="entry name" value="Hel308-like_dom4"/>
</dbReference>
<dbReference type="InterPro" id="IPR053416">
    <property type="entry name" value="Hel308_helicase"/>
</dbReference>
<dbReference type="InterPro" id="IPR050474">
    <property type="entry name" value="Hel308_SKI2-like"/>
</dbReference>
<dbReference type="InterPro" id="IPR014001">
    <property type="entry name" value="Helicase_ATP-bd"/>
</dbReference>
<dbReference type="InterPro" id="IPR001650">
    <property type="entry name" value="Helicase_C-like"/>
</dbReference>
<dbReference type="InterPro" id="IPR022965">
    <property type="entry name" value="Helicase_Hel308"/>
</dbReference>
<dbReference type="InterPro" id="IPR027417">
    <property type="entry name" value="P-loop_NTPase"/>
</dbReference>
<dbReference type="InterPro" id="IPR036390">
    <property type="entry name" value="WH_DNA-bd_sf"/>
</dbReference>
<dbReference type="NCBIfam" id="NF040935">
    <property type="entry name" value="helicase_Hel308"/>
    <property type="match status" value="1"/>
</dbReference>
<dbReference type="PANTHER" id="PTHR47961:SF10">
    <property type="entry name" value="ATP-DEPENDENT DNA HELICASE HEL308"/>
    <property type="match status" value="1"/>
</dbReference>
<dbReference type="PANTHER" id="PTHR47961">
    <property type="entry name" value="DNA POLYMERASE THETA, PUTATIVE (AFU_ORTHOLOGUE AFUA_1G05260)-RELATED"/>
    <property type="match status" value="1"/>
</dbReference>
<dbReference type="Pfam" id="PF00270">
    <property type="entry name" value="DEAD"/>
    <property type="match status" value="1"/>
</dbReference>
<dbReference type="Pfam" id="PF00271">
    <property type="entry name" value="Helicase_C"/>
    <property type="match status" value="1"/>
</dbReference>
<dbReference type="Pfam" id="PF21280">
    <property type="entry name" value="Helicase_dom4_arc"/>
    <property type="match status" value="1"/>
</dbReference>
<dbReference type="SMART" id="SM00487">
    <property type="entry name" value="DEXDc"/>
    <property type="match status" value="1"/>
</dbReference>
<dbReference type="SMART" id="SM00490">
    <property type="entry name" value="HELICc"/>
    <property type="match status" value="1"/>
</dbReference>
<dbReference type="SUPFAM" id="SSF52540">
    <property type="entry name" value="P-loop containing nucleoside triphosphate hydrolases"/>
    <property type="match status" value="1"/>
</dbReference>
<dbReference type="SUPFAM" id="SSF158702">
    <property type="entry name" value="Sec63 N-terminal domain-like"/>
    <property type="match status" value="1"/>
</dbReference>
<dbReference type="SUPFAM" id="SSF46785">
    <property type="entry name" value="Winged helix' DNA-binding domain"/>
    <property type="match status" value="1"/>
</dbReference>
<dbReference type="PROSITE" id="PS51192">
    <property type="entry name" value="HELICASE_ATP_BIND_1"/>
    <property type="match status" value="1"/>
</dbReference>
<dbReference type="PROSITE" id="PS51194">
    <property type="entry name" value="HELICASE_CTER"/>
    <property type="match status" value="1"/>
</dbReference>
<dbReference type="PROSITE" id="PS51195">
    <property type="entry name" value="Q_MOTIF"/>
    <property type="match status" value="1"/>
</dbReference>
<sequence length="708" mass="80500">MSIDDLKLPSNVIDIIKNRGIKKLNPPQTEAVKKGLLDGNRLLLTSPTGSGKTLIAEMGIISFLLKNGGKAIYVTPLRALTNEKYLTFKDWESIGFKVAMTSGDYDTDDAWLKNYDIIITTYEKLDSLWRHRPDWLNEANYFVLDELHYLNDPERGPVVESVTIRAKRRNLLALSATISNYKQIAKWLGAEPVATNWRPVPLMEGVMYPERKKKEYTILFRDNTARKVHGDDAIIAYTLDSLSKNGQVLVFRNSRKMAESTALKIANYMNFVSLDEKAISEILKQLDDIEEGGSDEKELLKSLISKGVAYHHAGLSKALRDIIEESFRKRKIKVIVATPTLAAGVNLPARTVIIGDIYRFNRKIVGYYDEIPVMEYKQMSGRAGRPGFDQIGESIIVVRDKEDVDRVFKKYILSDVEPIESKLGSERAFYTFLLGILSAEGSLSEKQLEAFAYESLLAKSVVDVYFDRAIRWLSEHSFIREENNTFTLTNFGKRVADLYINPFTADIIRKGLEGYKASCEIAYLHLLAFTPDGPLVSVGRNEEEELIELLEDLECELLVEEPYEEDEYSLYLNALKVALIMKDWIDEVDEDTILGKYNIGSGDLRNIVETMDWLTYSAYHLSKELRLDDHSDKLRILNLRVTDGVKEELLELVQIGGVGRKRARLLYNNGIKGLGDVVMNPDRVRNLLGQKLGERVVQEAARLLNRFH</sequence>
<reference key="1">
    <citation type="journal article" date="2001" name="Proc. Natl. Acad. Sci. U.S.A.">
        <title>The complete genome of the crenarchaeon Sulfolobus solfataricus P2.</title>
        <authorList>
            <person name="She Q."/>
            <person name="Singh R.K."/>
            <person name="Confalonieri F."/>
            <person name="Zivanovic Y."/>
            <person name="Allard G."/>
            <person name="Awayez M.J."/>
            <person name="Chan-Weiher C.C.-Y."/>
            <person name="Clausen I.G."/>
            <person name="Curtis B.A."/>
            <person name="De Moors A."/>
            <person name="Erauso G."/>
            <person name="Fletcher C."/>
            <person name="Gordon P.M.K."/>
            <person name="Heikamp-de Jong I."/>
            <person name="Jeffries A.C."/>
            <person name="Kozera C.J."/>
            <person name="Medina N."/>
            <person name="Peng X."/>
            <person name="Thi-Ngoc H.P."/>
            <person name="Redder P."/>
            <person name="Schenk M.E."/>
            <person name="Theriault C."/>
            <person name="Tolstrup N."/>
            <person name="Charlebois R.L."/>
            <person name="Doolittle W.F."/>
            <person name="Duguet M."/>
            <person name="Gaasterland T."/>
            <person name="Garrett R.A."/>
            <person name="Ragan M.A."/>
            <person name="Sensen C.W."/>
            <person name="Van der Oost J."/>
        </authorList>
    </citation>
    <scope>NUCLEOTIDE SEQUENCE [LARGE SCALE GENOMIC DNA]</scope>
    <source>
        <strain>ATCC 35092 / DSM 1617 / JCM 11322 / P2</strain>
    </source>
</reference>
<feature type="chain" id="PRO_0000102112" description="ATP-dependent DNA helicase Hel308">
    <location>
        <begin position="1"/>
        <end position="708"/>
    </location>
</feature>
<feature type="domain" description="Helicase ATP-binding" evidence="1">
    <location>
        <begin position="33"/>
        <end position="196"/>
    </location>
</feature>
<feature type="domain" description="Helicase C-terminal" evidence="1">
    <location>
        <begin position="229"/>
        <end position="435"/>
    </location>
</feature>
<feature type="short sequence motif" description="Q motif">
    <location>
        <begin position="1"/>
        <end position="29"/>
    </location>
</feature>
<feature type="short sequence motif" description="DEAH box" evidence="1">
    <location>
        <begin position="145"/>
        <end position="148"/>
    </location>
</feature>
<feature type="binding site" evidence="1">
    <location>
        <position position="28"/>
    </location>
    <ligand>
        <name>ATP</name>
        <dbReference type="ChEBI" id="CHEBI:30616"/>
    </ligand>
</feature>
<feature type="binding site" evidence="1">
    <location>
        <begin position="46"/>
        <end position="53"/>
    </location>
    <ligand>
        <name>ATP</name>
        <dbReference type="ChEBI" id="CHEBI:30616"/>
    </ligand>
</feature>
<comment type="function">
    <text evidence="1">DNA-dependent ATPase and 3'-5' DNA helicase that may be involved in repair of stalled replication forks.</text>
</comment>
<comment type="catalytic activity">
    <reaction evidence="1">
        <text>Couples ATP hydrolysis with the unwinding of duplex DNA by translocating in the 3'-5' direction.</text>
        <dbReference type="EC" id="5.6.2.4"/>
    </reaction>
</comment>
<comment type="catalytic activity">
    <reaction evidence="1">
        <text>ATP + H2O = ADP + phosphate + H(+)</text>
        <dbReference type="Rhea" id="RHEA:13065"/>
        <dbReference type="ChEBI" id="CHEBI:15377"/>
        <dbReference type="ChEBI" id="CHEBI:15378"/>
        <dbReference type="ChEBI" id="CHEBI:30616"/>
        <dbReference type="ChEBI" id="CHEBI:43474"/>
        <dbReference type="ChEBI" id="CHEBI:456216"/>
        <dbReference type="EC" id="5.6.2.4"/>
    </reaction>
</comment>
<comment type="subunit">
    <text evidence="1">Monomer.</text>
</comment>
<comment type="similarity">
    <text evidence="1">Belongs to the helicase family. Hel308 subfamily.</text>
</comment>
<comment type="sequence caution" evidence="2">
    <conflict type="erroneous initiation">
        <sequence resource="EMBL-CDS" id="AAK42601"/>
    </conflict>
    <text>Extended N-terminus.</text>
</comment>
<accession>Q97VY9</accession>
<organism>
    <name type="scientific">Saccharolobus solfataricus (strain ATCC 35092 / DSM 1617 / JCM 11322 / P2)</name>
    <name type="common">Sulfolobus solfataricus</name>
    <dbReference type="NCBI Taxonomy" id="273057"/>
    <lineage>
        <taxon>Archaea</taxon>
        <taxon>Thermoproteota</taxon>
        <taxon>Thermoprotei</taxon>
        <taxon>Sulfolobales</taxon>
        <taxon>Sulfolobaceae</taxon>
        <taxon>Saccharolobus</taxon>
    </lineage>
</organism>
<proteinExistence type="inferred from homology"/>
<evidence type="ECO:0000255" key="1">
    <source>
        <dbReference type="HAMAP-Rule" id="MF_00442"/>
    </source>
</evidence>
<evidence type="ECO:0000305" key="2"/>
<keyword id="KW-0067">ATP-binding</keyword>
<keyword id="KW-0227">DNA damage</keyword>
<keyword id="KW-0234">DNA repair</keyword>
<keyword id="KW-0238">DNA-binding</keyword>
<keyword id="KW-0347">Helicase</keyword>
<keyword id="KW-0378">Hydrolase</keyword>
<keyword id="KW-0413">Isomerase</keyword>
<keyword id="KW-0547">Nucleotide-binding</keyword>
<keyword id="KW-1185">Reference proteome</keyword>